<protein>
    <recommendedName>
        <fullName evidence="1">Adaptive-response sensory kinase SasA</fullName>
        <ecNumber evidence="1">2.7.13.3</ecNumber>
    </recommendedName>
    <alternativeName>
        <fullName evidence="1">Sensor histidine kinase SasA</fullName>
    </alternativeName>
</protein>
<proteinExistence type="inferred from homology"/>
<keyword id="KW-0067">ATP-binding</keyword>
<keyword id="KW-0090">Biological rhythms</keyword>
<keyword id="KW-0418">Kinase</keyword>
<keyword id="KW-0547">Nucleotide-binding</keyword>
<keyword id="KW-0597">Phosphoprotein</keyword>
<keyword id="KW-1185">Reference proteome</keyword>
<keyword id="KW-0808">Transferase</keyword>
<keyword id="KW-0902">Two-component regulatory system</keyword>
<gene>
    <name evidence="1" type="primary">sasA</name>
    <name type="ordered locus">P9301_11841</name>
</gene>
<reference key="1">
    <citation type="journal article" date="2007" name="PLoS Genet.">
        <title>Patterns and implications of gene gain and loss in the evolution of Prochlorococcus.</title>
        <authorList>
            <person name="Kettler G.C."/>
            <person name="Martiny A.C."/>
            <person name="Huang K."/>
            <person name="Zucker J."/>
            <person name="Coleman M.L."/>
            <person name="Rodrigue S."/>
            <person name="Chen F."/>
            <person name="Lapidus A."/>
            <person name="Ferriera S."/>
            <person name="Johnson J."/>
            <person name="Steglich C."/>
            <person name="Church G.M."/>
            <person name="Richardson P."/>
            <person name="Chisholm S.W."/>
        </authorList>
    </citation>
    <scope>NUCLEOTIDE SEQUENCE [LARGE SCALE GENOMIC DNA]</scope>
    <source>
        <strain>MIT 9301</strain>
    </source>
</reference>
<evidence type="ECO:0000255" key="1">
    <source>
        <dbReference type="HAMAP-Rule" id="MF_01837"/>
    </source>
</evidence>
<accession>A3PDI2</accession>
<feature type="chain" id="PRO_1000088441" description="Adaptive-response sensory kinase SasA">
    <location>
        <begin position="1"/>
        <end position="372"/>
    </location>
</feature>
<feature type="domain" description="Histidine kinase" evidence="1">
    <location>
        <begin position="147"/>
        <end position="360"/>
    </location>
</feature>
<feature type="modified residue" description="Phosphohistidine; by autocatalysis" evidence="1">
    <location>
        <position position="150"/>
    </location>
</feature>
<sequence length="372" mass="42438">MNDKKELKLILVAARNQLSSNDIKSLIAYLESDDCEFEISLQISEPTEQPELLELHRLVAIPALIKVSPAPKQIFAGSNIFSQLQKWLPRWTQEGLTKNLGINLQPSKIDSIRTQKEFLLEDELLVLRQENETLTKRIESQERLLRMVAHELRTPLTAATLAVQSQKLGQIDISKLQEVIKRRLEEIELLSQDLLEVGTTKWEALFNPQKIDLGNISAEVILELEKFWRLRNIEIDTDIPSDLPSVFADQRRMRQVFLNLIENAIKFSRDSGSIKITMIHKTNQWVEITICDKGAGIPLSEQKRIFLDRVRLPQTSEGTSGFGIGLSVCRRIVQVHGGRIWVVSEVGVGSCFHFTVPVWQGQNKEQQYLTKG</sequence>
<name>SASA_PROM0</name>
<organism>
    <name type="scientific">Prochlorococcus marinus (strain MIT 9301)</name>
    <dbReference type="NCBI Taxonomy" id="167546"/>
    <lineage>
        <taxon>Bacteria</taxon>
        <taxon>Bacillati</taxon>
        <taxon>Cyanobacteriota</taxon>
        <taxon>Cyanophyceae</taxon>
        <taxon>Synechococcales</taxon>
        <taxon>Prochlorococcaceae</taxon>
        <taxon>Prochlorococcus</taxon>
    </lineage>
</organism>
<dbReference type="EC" id="2.7.13.3" evidence="1"/>
<dbReference type="EMBL" id="CP000576">
    <property type="protein sequence ID" value="ABO17807.1"/>
    <property type="molecule type" value="Genomic_DNA"/>
</dbReference>
<dbReference type="RefSeq" id="WP_011863135.1">
    <property type="nucleotide sequence ID" value="NC_009091.1"/>
</dbReference>
<dbReference type="SMR" id="A3PDI2"/>
<dbReference type="STRING" id="167546.P9301_11841"/>
<dbReference type="KEGG" id="pmg:P9301_11841"/>
<dbReference type="eggNOG" id="COG2205">
    <property type="taxonomic scope" value="Bacteria"/>
</dbReference>
<dbReference type="HOGENOM" id="CLU_723030_0_0_3"/>
<dbReference type="OrthoDB" id="9773956at2"/>
<dbReference type="Proteomes" id="UP000001430">
    <property type="component" value="Chromosome"/>
</dbReference>
<dbReference type="GO" id="GO:0005524">
    <property type="term" value="F:ATP binding"/>
    <property type="evidence" value="ECO:0007669"/>
    <property type="project" value="UniProtKB-KW"/>
</dbReference>
<dbReference type="GO" id="GO:0000156">
    <property type="term" value="F:phosphorelay response regulator activity"/>
    <property type="evidence" value="ECO:0007669"/>
    <property type="project" value="TreeGrafter"/>
</dbReference>
<dbReference type="GO" id="GO:0000155">
    <property type="term" value="F:phosphorelay sensor kinase activity"/>
    <property type="evidence" value="ECO:0007669"/>
    <property type="project" value="InterPro"/>
</dbReference>
<dbReference type="GO" id="GO:0030295">
    <property type="term" value="F:protein kinase activator activity"/>
    <property type="evidence" value="ECO:0007669"/>
    <property type="project" value="TreeGrafter"/>
</dbReference>
<dbReference type="GO" id="GO:0007623">
    <property type="term" value="P:circadian rhythm"/>
    <property type="evidence" value="ECO:0007669"/>
    <property type="project" value="UniProtKB-UniRule"/>
</dbReference>
<dbReference type="GO" id="GO:0007234">
    <property type="term" value="P:osmosensory signaling via phosphorelay pathway"/>
    <property type="evidence" value="ECO:0007669"/>
    <property type="project" value="TreeGrafter"/>
</dbReference>
<dbReference type="CDD" id="cd00075">
    <property type="entry name" value="HATPase"/>
    <property type="match status" value="1"/>
</dbReference>
<dbReference type="CDD" id="cd00082">
    <property type="entry name" value="HisKA"/>
    <property type="match status" value="1"/>
</dbReference>
<dbReference type="FunFam" id="3.30.565.10:FF:000006">
    <property type="entry name" value="Sensor histidine kinase WalK"/>
    <property type="match status" value="1"/>
</dbReference>
<dbReference type="Gene3D" id="1.10.287.130">
    <property type="match status" value="1"/>
</dbReference>
<dbReference type="Gene3D" id="3.40.30.10">
    <property type="entry name" value="Glutaredoxin"/>
    <property type="match status" value="1"/>
</dbReference>
<dbReference type="Gene3D" id="3.30.565.10">
    <property type="entry name" value="Histidine kinase-like ATPase, C-terminal domain"/>
    <property type="match status" value="1"/>
</dbReference>
<dbReference type="HAMAP" id="MF_01837">
    <property type="entry name" value="Kinase_SasA"/>
    <property type="match status" value="1"/>
</dbReference>
<dbReference type="InterPro" id="IPR036890">
    <property type="entry name" value="HATPase_C_sf"/>
</dbReference>
<dbReference type="InterPro" id="IPR005467">
    <property type="entry name" value="His_kinase_dom"/>
</dbReference>
<dbReference type="InterPro" id="IPR003661">
    <property type="entry name" value="HisK_dim/P_dom"/>
</dbReference>
<dbReference type="InterPro" id="IPR036097">
    <property type="entry name" value="HisK_dim/P_sf"/>
</dbReference>
<dbReference type="InterPro" id="IPR011649">
    <property type="entry name" value="KaiB_domain"/>
</dbReference>
<dbReference type="InterPro" id="IPR023527">
    <property type="entry name" value="Kinase_SasA"/>
</dbReference>
<dbReference type="InterPro" id="IPR052545">
    <property type="entry name" value="Light-responsive_reg"/>
</dbReference>
<dbReference type="InterPro" id="IPR004358">
    <property type="entry name" value="Sig_transdc_His_kin-like_C"/>
</dbReference>
<dbReference type="InterPro" id="IPR036249">
    <property type="entry name" value="Thioredoxin-like_sf"/>
</dbReference>
<dbReference type="NCBIfam" id="NF006800">
    <property type="entry name" value="PRK09303.1"/>
    <property type="match status" value="1"/>
</dbReference>
<dbReference type="PANTHER" id="PTHR42878:SF7">
    <property type="entry name" value="SENSOR HISTIDINE KINASE GLRK"/>
    <property type="match status" value="1"/>
</dbReference>
<dbReference type="PANTHER" id="PTHR42878">
    <property type="entry name" value="TWO-COMPONENT HISTIDINE KINASE"/>
    <property type="match status" value="1"/>
</dbReference>
<dbReference type="Pfam" id="PF02518">
    <property type="entry name" value="HATPase_c"/>
    <property type="match status" value="1"/>
</dbReference>
<dbReference type="Pfam" id="PF00512">
    <property type="entry name" value="HisKA"/>
    <property type="match status" value="1"/>
</dbReference>
<dbReference type="Pfam" id="PF07689">
    <property type="entry name" value="KaiB"/>
    <property type="match status" value="1"/>
</dbReference>
<dbReference type="PRINTS" id="PR00344">
    <property type="entry name" value="BCTRLSENSOR"/>
</dbReference>
<dbReference type="SMART" id="SM00387">
    <property type="entry name" value="HATPase_c"/>
    <property type="match status" value="1"/>
</dbReference>
<dbReference type="SMART" id="SM00388">
    <property type="entry name" value="HisKA"/>
    <property type="match status" value="1"/>
</dbReference>
<dbReference type="SMART" id="SM01248">
    <property type="entry name" value="KaiB"/>
    <property type="match status" value="1"/>
</dbReference>
<dbReference type="SUPFAM" id="SSF55874">
    <property type="entry name" value="ATPase domain of HSP90 chaperone/DNA topoisomerase II/histidine kinase"/>
    <property type="match status" value="1"/>
</dbReference>
<dbReference type="SUPFAM" id="SSF47384">
    <property type="entry name" value="Homodimeric domain of signal transducing histidine kinase"/>
    <property type="match status" value="1"/>
</dbReference>
<dbReference type="SUPFAM" id="SSF52833">
    <property type="entry name" value="Thioredoxin-like"/>
    <property type="match status" value="1"/>
</dbReference>
<dbReference type="PROSITE" id="PS50109">
    <property type="entry name" value="HIS_KIN"/>
    <property type="match status" value="1"/>
</dbReference>
<comment type="function">
    <text evidence="1">Member of the two-component regulatory system SasA/RpaA involved in genome-wide circadian gene expression. One of several clock output pathways. Participates in the Kai clock protein complex, the main circadian regulator in cyanobacteria, via its interaction with KaiC. KaiC enhances the autophosphorylation activity of SasA, which then transfers its phosphate group to RpaA to activate it. In addition to its output function, recruits fold-shifted KaiB (KaiB(fs)) to KaiC to cooperatively form the KaiB(6):KaiC(6) complex (independent of SasA kinase activity). Required for robustness of the circadian rhythm of gene expression and is involved in clock output, also required for adaptation to light/dark cycles.</text>
</comment>
<comment type="catalytic activity">
    <reaction evidence="1">
        <text>ATP + protein L-histidine = ADP + protein N-phospho-L-histidine.</text>
        <dbReference type="EC" id="2.7.13.3"/>
    </reaction>
</comment>
<comment type="subunit">
    <text evidence="1">Homooligomerizes. Interacts with KaiC. Participates in the KaiBC complex, whose core is composed of a KaiC homohexamer and 6 KaiB.</text>
</comment>
<comment type="domain">
    <text evidence="1">The N-terminus interacts with KaiC, while the C-terminal histidine kinase domain autophosphorylates and is probably responsible for self-oligomerization. The N-terminal domain stimulates the C-terminus to autophosphorylate.</text>
</comment>